<sequence length="161" mass="17036">MSIVKEFREFIARGNVVDLAVGVIIGAAFNGIVKSLVDGVIMPPIGLVTGGLDFSKLQWVLKPEDPVTEAVELVAIQYGAFINTVIQFLIVAVVVFLLVKLVNHIRRADAAEPAPEAPAAPTPEERLLTEIRDLLAKPATVTAAPKAAAAPVAKPKTKPKA</sequence>
<comment type="function">
    <text evidence="1">Channel that opens in response to stretch forces in the membrane lipid bilayer. May participate in the regulation of osmotic pressure changes within the cell.</text>
</comment>
<comment type="subunit">
    <text evidence="1">Homopentamer.</text>
</comment>
<comment type="subcellular location">
    <subcellularLocation>
        <location evidence="1">Cell inner membrane</location>
        <topology evidence="1">Multi-pass membrane protein</topology>
    </subcellularLocation>
</comment>
<comment type="similarity">
    <text evidence="1">Belongs to the MscL family.</text>
</comment>
<gene>
    <name evidence="1" type="primary">mscL</name>
    <name type="ordered locus">Caul_0105</name>
</gene>
<accession>B0T274</accession>
<name>MSCL_CAUSK</name>
<keyword id="KW-0997">Cell inner membrane</keyword>
<keyword id="KW-1003">Cell membrane</keyword>
<keyword id="KW-0407">Ion channel</keyword>
<keyword id="KW-0406">Ion transport</keyword>
<keyword id="KW-0472">Membrane</keyword>
<keyword id="KW-0812">Transmembrane</keyword>
<keyword id="KW-1133">Transmembrane helix</keyword>
<keyword id="KW-0813">Transport</keyword>
<proteinExistence type="inferred from homology"/>
<reference key="1">
    <citation type="submission" date="2008-01" db="EMBL/GenBank/DDBJ databases">
        <title>Complete sequence of chromosome of Caulobacter sp. K31.</title>
        <authorList>
            <consortium name="US DOE Joint Genome Institute"/>
            <person name="Copeland A."/>
            <person name="Lucas S."/>
            <person name="Lapidus A."/>
            <person name="Barry K."/>
            <person name="Glavina del Rio T."/>
            <person name="Dalin E."/>
            <person name="Tice H."/>
            <person name="Pitluck S."/>
            <person name="Bruce D."/>
            <person name="Goodwin L."/>
            <person name="Thompson L.S."/>
            <person name="Brettin T."/>
            <person name="Detter J.C."/>
            <person name="Han C."/>
            <person name="Schmutz J."/>
            <person name="Larimer F."/>
            <person name="Land M."/>
            <person name="Hauser L."/>
            <person name="Kyrpides N."/>
            <person name="Kim E."/>
            <person name="Stephens C."/>
            <person name="Richardson P."/>
        </authorList>
    </citation>
    <scope>NUCLEOTIDE SEQUENCE [LARGE SCALE GENOMIC DNA]</scope>
    <source>
        <strain>K31</strain>
    </source>
</reference>
<evidence type="ECO:0000255" key="1">
    <source>
        <dbReference type="HAMAP-Rule" id="MF_00115"/>
    </source>
</evidence>
<evidence type="ECO:0000256" key="2">
    <source>
        <dbReference type="SAM" id="MobiDB-lite"/>
    </source>
</evidence>
<feature type="chain" id="PRO_1000076036" description="Large-conductance mechanosensitive channel">
    <location>
        <begin position="1"/>
        <end position="161"/>
    </location>
</feature>
<feature type="transmembrane region" description="Helical" evidence="1">
    <location>
        <begin position="21"/>
        <end position="41"/>
    </location>
</feature>
<feature type="transmembrane region" description="Helical" evidence="1">
    <location>
        <begin position="79"/>
        <end position="99"/>
    </location>
</feature>
<feature type="region of interest" description="Disordered" evidence="2">
    <location>
        <begin position="142"/>
        <end position="161"/>
    </location>
</feature>
<feature type="compositionally biased region" description="Low complexity" evidence="2">
    <location>
        <begin position="142"/>
        <end position="154"/>
    </location>
</feature>
<dbReference type="EMBL" id="CP000927">
    <property type="protein sequence ID" value="ABZ69243.1"/>
    <property type="molecule type" value="Genomic_DNA"/>
</dbReference>
<dbReference type="SMR" id="B0T274"/>
<dbReference type="STRING" id="366602.Caul_0105"/>
<dbReference type="KEGG" id="cak:Caul_0105"/>
<dbReference type="eggNOG" id="COG1970">
    <property type="taxonomic scope" value="Bacteria"/>
</dbReference>
<dbReference type="HOGENOM" id="CLU_095787_0_0_5"/>
<dbReference type="OrthoDB" id="9810350at2"/>
<dbReference type="GO" id="GO:0005886">
    <property type="term" value="C:plasma membrane"/>
    <property type="evidence" value="ECO:0007669"/>
    <property type="project" value="UniProtKB-SubCell"/>
</dbReference>
<dbReference type="GO" id="GO:0008381">
    <property type="term" value="F:mechanosensitive monoatomic ion channel activity"/>
    <property type="evidence" value="ECO:0007669"/>
    <property type="project" value="UniProtKB-UniRule"/>
</dbReference>
<dbReference type="Gene3D" id="1.10.1200.120">
    <property type="entry name" value="Large-conductance mechanosensitive channel, MscL, domain 1"/>
    <property type="match status" value="1"/>
</dbReference>
<dbReference type="HAMAP" id="MF_00115">
    <property type="entry name" value="MscL"/>
    <property type="match status" value="1"/>
</dbReference>
<dbReference type="InterPro" id="IPR019823">
    <property type="entry name" value="Mechanosensitive_channel_CS"/>
</dbReference>
<dbReference type="InterPro" id="IPR001185">
    <property type="entry name" value="MS_channel"/>
</dbReference>
<dbReference type="InterPro" id="IPR037673">
    <property type="entry name" value="MSC/AndL"/>
</dbReference>
<dbReference type="InterPro" id="IPR036019">
    <property type="entry name" value="MscL_channel"/>
</dbReference>
<dbReference type="NCBIfam" id="TIGR00220">
    <property type="entry name" value="mscL"/>
    <property type="match status" value="1"/>
</dbReference>
<dbReference type="NCBIfam" id="NF001843">
    <property type="entry name" value="PRK00567.1-4"/>
    <property type="match status" value="1"/>
</dbReference>
<dbReference type="PANTHER" id="PTHR30266:SF2">
    <property type="entry name" value="LARGE-CONDUCTANCE MECHANOSENSITIVE CHANNEL"/>
    <property type="match status" value="1"/>
</dbReference>
<dbReference type="PANTHER" id="PTHR30266">
    <property type="entry name" value="MECHANOSENSITIVE CHANNEL MSCL"/>
    <property type="match status" value="1"/>
</dbReference>
<dbReference type="Pfam" id="PF01741">
    <property type="entry name" value="MscL"/>
    <property type="match status" value="1"/>
</dbReference>
<dbReference type="PRINTS" id="PR01264">
    <property type="entry name" value="MECHCHANNEL"/>
</dbReference>
<dbReference type="SUPFAM" id="SSF81330">
    <property type="entry name" value="Gated mechanosensitive channel"/>
    <property type="match status" value="1"/>
</dbReference>
<dbReference type="PROSITE" id="PS01327">
    <property type="entry name" value="MSCL"/>
    <property type="match status" value="1"/>
</dbReference>
<protein>
    <recommendedName>
        <fullName evidence="1">Large-conductance mechanosensitive channel</fullName>
    </recommendedName>
</protein>
<organism>
    <name type="scientific">Caulobacter sp. (strain K31)</name>
    <dbReference type="NCBI Taxonomy" id="366602"/>
    <lineage>
        <taxon>Bacteria</taxon>
        <taxon>Pseudomonadati</taxon>
        <taxon>Pseudomonadota</taxon>
        <taxon>Alphaproteobacteria</taxon>
        <taxon>Caulobacterales</taxon>
        <taxon>Caulobacteraceae</taxon>
        <taxon>Caulobacter</taxon>
    </lineage>
</organism>